<gene>
    <name evidence="1" type="primary">tpiA</name>
    <name type="ordered locus">APJL_1972</name>
</gene>
<dbReference type="EC" id="5.3.1.1" evidence="1"/>
<dbReference type="EMBL" id="CP000687">
    <property type="protein sequence ID" value="ABY70520.1"/>
    <property type="molecule type" value="Genomic_DNA"/>
</dbReference>
<dbReference type="RefSeq" id="WP_005599672.1">
    <property type="nucleotide sequence ID" value="NC_010278.1"/>
</dbReference>
<dbReference type="SMR" id="B0BTK6"/>
<dbReference type="GeneID" id="48600230"/>
<dbReference type="KEGG" id="apj:APJL_1972"/>
<dbReference type="HOGENOM" id="CLU_024251_2_1_6"/>
<dbReference type="UniPathway" id="UPA00109">
    <property type="reaction ID" value="UER00189"/>
</dbReference>
<dbReference type="UniPathway" id="UPA00138"/>
<dbReference type="Proteomes" id="UP000008547">
    <property type="component" value="Chromosome"/>
</dbReference>
<dbReference type="GO" id="GO:0005829">
    <property type="term" value="C:cytosol"/>
    <property type="evidence" value="ECO:0007669"/>
    <property type="project" value="TreeGrafter"/>
</dbReference>
<dbReference type="GO" id="GO:0004807">
    <property type="term" value="F:triose-phosphate isomerase activity"/>
    <property type="evidence" value="ECO:0007669"/>
    <property type="project" value="UniProtKB-UniRule"/>
</dbReference>
<dbReference type="GO" id="GO:0006094">
    <property type="term" value="P:gluconeogenesis"/>
    <property type="evidence" value="ECO:0007669"/>
    <property type="project" value="UniProtKB-UniRule"/>
</dbReference>
<dbReference type="GO" id="GO:0046166">
    <property type="term" value="P:glyceraldehyde-3-phosphate biosynthetic process"/>
    <property type="evidence" value="ECO:0007669"/>
    <property type="project" value="TreeGrafter"/>
</dbReference>
<dbReference type="GO" id="GO:0019563">
    <property type="term" value="P:glycerol catabolic process"/>
    <property type="evidence" value="ECO:0007669"/>
    <property type="project" value="TreeGrafter"/>
</dbReference>
<dbReference type="GO" id="GO:0006096">
    <property type="term" value="P:glycolytic process"/>
    <property type="evidence" value="ECO:0007669"/>
    <property type="project" value="UniProtKB-UniRule"/>
</dbReference>
<dbReference type="CDD" id="cd00311">
    <property type="entry name" value="TIM"/>
    <property type="match status" value="1"/>
</dbReference>
<dbReference type="FunFam" id="3.20.20.70:FF:000020">
    <property type="entry name" value="Triosephosphate isomerase"/>
    <property type="match status" value="1"/>
</dbReference>
<dbReference type="Gene3D" id="3.20.20.70">
    <property type="entry name" value="Aldolase class I"/>
    <property type="match status" value="1"/>
</dbReference>
<dbReference type="HAMAP" id="MF_00147_B">
    <property type="entry name" value="TIM_B"/>
    <property type="match status" value="1"/>
</dbReference>
<dbReference type="InterPro" id="IPR013785">
    <property type="entry name" value="Aldolase_TIM"/>
</dbReference>
<dbReference type="InterPro" id="IPR035990">
    <property type="entry name" value="TIM_sf"/>
</dbReference>
<dbReference type="InterPro" id="IPR022896">
    <property type="entry name" value="TrioseP_Isoase_bac/euk"/>
</dbReference>
<dbReference type="InterPro" id="IPR000652">
    <property type="entry name" value="Triosephosphate_isomerase"/>
</dbReference>
<dbReference type="InterPro" id="IPR020861">
    <property type="entry name" value="Triosephosphate_isomerase_AS"/>
</dbReference>
<dbReference type="NCBIfam" id="TIGR00419">
    <property type="entry name" value="tim"/>
    <property type="match status" value="1"/>
</dbReference>
<dbReference type="PANTHER" id="PTHR21139">
    <property type="entry name" value="TRIOSEPHOSPHATE ISOMERASE"/>
    <property type="match status" value="1"/>
</dbReference>
<dbReference type="PANTHER" id="PTHR21139:SF42">
    <property type="entry name" value="TRIOSEPHOSPHATE ISOMERASE"/>
    <property type="match status" value="1"/>
</dbReference>
<dbReference type="Pfam" id="PF00121">
    <property type="entry name" value="TIM"/>
    <property type="match status" value="1"/>
</dbReference>
<dbReference type="SUPFAM" id="SSF51351">
    <property type="entry name" value="Triosephosphate isomerase (TIM)"/>
    <property type="match status" value="1"/>
</dbReference>
<dbReference type="PROSITE" id="PS00171">
    <property type="entry name" value="TIM_1"/>
    <property type="match status" value="1"/>
</dbReference>
<dbReference type="PROSITE" id="PS51440">
    <property type="entry name" value="TIM_2"/>
    <property type="match status" value="1"/>
</dbReference>
<comment type="function">
    <text evidence="1">Involved in the gluconeogenesis. Catalyzes stereospecifically the conversion of dihydroxyacetone phosphate (DHAP) to D-glyceraldehyde-3-phosphate (G3P).</text>
</comment>
<comment type="catalytic activity">
    <reaction evidence="1">
        <text>D-glyceraldehyde 3-phosphate = dihydroxyacetone phosphate</text>
        <dbReference type="Rhea" id="RHEA:18585"/>
        <dbReference type="ChEBI" id="CHEBI:57642"/>
        <dbReference type="ChEBI" id="CHEBI:59776"/>
        <dbReference type="EC" id="5.3.1.1"/>
    </reaction>
</comment>
<comment type="pathway">
    <text evidence="1">Carbohydrate biosynthesis; gluconeogenesis.</text>
</comment>
<comment type="pathway">
    <text evidence="1">Carbohydrate degradation; glycolysis; D-glyceraldehyde 3-phosphate from glycerone phosphate: step 1/1.</text>
</comment>
<comment type="subunit">
    <text evidence="1">Homodimer.</text>
</comment>
<comment type="subcellular location">
    <subcellularLocation>
        <location evidence="1">Cytoplasm</location>
    </subcellularLocation>
</comment>
<comment type="similarity">
    <text evidence="1">Belongs to the triosephosphate isomerase family.</text>
</comment>
<evidence type="ECO:0000255" key="1">
    <source>
        <dbReference type="HAMAP-Rule" id="MF_00147"/>
    </source>
</evidence>
<keyword id="KW-0963">Cytoplasm</keyword>
<keyword id="KW-0312">Gluconeogenesis</keyword>
<keyword id="KW-0324">Glycolysis</keyword>
<keyword id="KW-0413">Isomerase</keyword>
<name>TPIS_ACTPJ</name>
<sequence length="256" mass="26522">MARRPLVMGNWKLNGSKAFTKELIAGLKAELADVKGCDVAIAPPVMYLAEAEAALAGQSVIALGAQNVDVNVQGAFTGDISTEMLKDFGAKYIIIGHSERRTYHKECDTFIAKKFAALKAAGLVPVLCIGETEAENEAGQTEAVCAKQIDAVIDALGVEAFNGAVIAYEPIWAIGTGKSATPAQAQAVHAFIRGHIAAKSQAVADQVIIQYGGSVNDANAAELFTQPDIDGALVGGASLKAPAFAVIVKAAEKAKA</sequence>
<accession>B0BTK6</accession>
<reference key="1">
    <citation type="journal article" date="2008" name="PLoS ONE">
        <title>Genome biology of Actinobacillus pleuropneumoniae JL03, an isolate of serotype 3 prevalent in China.</title>
        <authorList>
            <person name="Xu Z."/>
            <person name="Zhou Y."/>
            <person name="Li L."/>
            <person name="Zhou R."/>
            <person name="Xiao S."/>
            <person name="Wan Y."/>
            <person name="Zhang S."/>
            <person name="Wang K."/>
            <person name="Li W."/>
            <person name="Li L."/>
            <person name="Jin H."/>
            <person name="Kang M."/>
            <person name="Dalai B."/>
            <person name="Li T."/>
            <person name="Liu L."/>
            <person name="Cheng Y."/>
            <person name="Zhang L."/>
            <person name="Xu T."/>
            <person name="Zheng H."/>
            <person name="Pu S."/>
            <person name="Wang B."/>
            <person name="Gu W."/>
            <person name="Zhang X.L."/>
            <person name="Zhu G.-F."/>
            <person name="Wang S."/>
            <person name="Zhao G.-P."/>
            <person name="Chen H."/>
        </authorList>
    </citation>
    <scope>NUCLEOTIDE SEQUENCE [LARGE SCALE GENOMIC DNA]</scope>
    <source>
        <strain>JL03</strain>
    </source>
</reference>
<proteinExistence type="inferred from homology"/>
<protein>
    <recommendedName>
        <fullName evidence="1">Triosephosphate isomerase</fullName>
        <shortName evidence="1">TIM</shortName>
        <shortName evidence="1">TPI</shortName>
        <ecNumber evidence="1">5.3.1.1</ecNumber>
    </recommendedName>
    <alternativeName>
        <fullName evidence="1">Triose-phosphate isomerase</fullName>
    </alternativeName>
</protein>
<organism>
    <name type="scientific">Actinobacillus pleuropneumoniae serotype 3 (strain JL03)</name>
    <dbReference type="NCBI Taxonomy" id="434271"/>
    <lineage>
        <taxon>Bacteria</taxon>
        <taxon>Pseudomonadati</taxon>
        <taxon>Pseudomonadota</taxon>
        <taxon>Gammaproteobacteria</taxon>
        <taxon>Pasteurellales</taxon>
        <taxon>Pasteurellaceae</taxon>
        <taxon>Actinobacillus</taxon>
    </lineage>
</organism>
<feature type="chain" id="PRO_1000096472" description="Triosephosphate isomerase">
    <location>
        <begin position="1"/>
        <end position="256"/>
    </location>
</feature>
<feature type="active site" description="Electrophile" evidence="1">
    <location>
        <position position="97"/>
    </location>
</feature>
<feature type="active site" description="Proton acceptor" evidence="1">
    <location>
        <position position="169"/>
    </location>
</feature>
<feature type="binding site" evidence="1">
    <location>
        <begin position="10"/>
        <end position="12"/>
    </location>
    <ligand>
        <name>substrate</name>
    </ligand>
</feature>
<feature type="binding site" evidence="1">
    <location>
        <position position="175"/>
    </location>
    <ligand>
        <name>substrate</name>
    </ligand>
</feature>
<feature type="binding site" evidence="1">
    <location>
        <position position="214"/>
    </location>
    <ligand>
        <name>substrate</name>
    </ligand>
</feature>
<feature type="binding site" evidence="1">
    <location>
        <begin position="235"/>
        <end position="236"/>
    </location>
    <ligand>
        <name>substrate</name>
    </ligand>
</feature>